<dbReference type="EC" id="3.2.1.2"/>
<dbReference type="EMBL" id="X56785">
    <property type="protein sequence ID" value="CAA40105.1"/>
    <property type="molecule type" value="mRNA"/>
</dbReference>
<dbReference type="PIR" id="S38779">
    <property type="entry name" value="S38779"/>
</dbReference>
<dbReference type="SMR" id="P30271"/>
<dbReference type="CAZy" id="GH14">
    <property type="family name" value="Glycoside Hydrolase Family 14"/>
</dbReference>
<dbReference type="GO" id="GO:0016161">
    <property type="term" value="F:beta-amylase activity"/>
    <property type="evidence" value="ECO:0007669"/>
    <property type="project" value="UniProtKB-EC"/>
</dbReference>
<dbReference type="GO" id="GO:0000272">
    <property type="term" value="P:polysaccharide catabolic process"/>
    <property type="evidence" value="ECO:0007669"/>
    <property type="project" value="UniProtKB-KW"/>
</dbReference>
<dbReference type="Gene3D" id="3.20.20.80">
    <property type="entry name" value="Glycosidases"/>
    <property type="match status" value="1"/>
</dbReference>
<dbReference type="InterPro" id="IPR001554">
    <property type="entry name" value="Glyco_hydro_14"/>
</dbReference>
<dbReference type="InterPro" id="IPR001371">
    <property type="entry name" value="Glyco_hydro_14B_pln"/>
</dbReference>
<dbReference type="InterPro" id="IPR017853">
    <property type="entry name" value="Glycoside_hydrolase_SF"/>
</dbReference>
<dbReference type="PANTHER" id="PTHR31352:SF39">
    <property type="entry name" value="BETA-AMYLASE"/>
    <property type="match status" value="1"/>
</dbReference>
<dbReference type="PANTHER" id="PTHR31352">
    <property type="entry name" value="BETA-AMYLASE 1, CHLOROPLASTIC"/>
    <property type="match status" value="1"/>
</dbReference>
<dbReference type="Pfam" id="PF01373">
    <property type="entry name" value="Glyco_hydro_14"/>
    <property type="match status" value="1"/>
</dbReference>
<dbReference type="PRINTS" id="PR00750">
    <property type="entry name" value="BETAAMYLASE"/>
</dbReference>
<dbReference type="PRINTS" id="PR00842">
    <property type="entry name" value="GLHYDLASE14B"/>
</dbReference>
<dbReference type="SUPFAM" id="SSF51445">
    <property type="entry name" value="(Trans)glycosidases"/>
    <property type="match status" value="1"/>
</dbReference>
<comment type="catalytic activity">
    <reaction>
        <text>Hydrolysis of (1-&gt;4)-alpha-D-glucosidic linkages in polysaccharides so as to remove successive maltose units from the non-reducing ends of the chains.</text>
        <dbReference type="EC" id="3.2.1.2"/>
    </reaction>
</comment>
<comment type="similarity">
    <text evidence="2">Belongs to the glycosyl hydrolase 14 family.</text>
</comment>
<proteinExistence type="evidence at transcript level"/>
<gene>
    <name type="primary">BMY1</name>
</gene>
<reference key="1">
    <citation type="journal article" date="1991" name="Theor. Appl. Genet.">
        <title>Characterization of cDNA clones for rye endosperm beta-amylase and analysis of beta-amylase deficiency in rye mutant lines.</title>
        <authorList>
            <person name="Rorat T."/>
            <person name="Sadowski J."/>
            <person name="Grellet F."/>
            <person name="Daussant J."/>
            <person name="Delseny M."/>
        </authorList>
        <dbReference type="AGRICOLA" id="IND92007634"/>
    </citation>
    <scope>NUCLEOTIDE SEQUENCE [MRNA]</scope>
    <source>
        <tissue>Endosperm</tissue>
    </source>
</reference>
<feature type="chain" id="PRO_0000153937" description="Beta-amylase">
    <location>
        <begin position="1" status="less than"/>
        <end position="222"/>
    </location>
</feature>
<feature type="active site" description="Proton acceptor" evidence="1">
    <location>
        <position position="74"/>
    </location>
</feature>
<feature type="binding site" evidence="1">
    <location>
        <position position="36"/>
    </location>
    <ligand>
        <name>substrate</name>
    </ligand>
</feature>
<feature type="binding site" evidence="1">
    <location>
        <begin position="75"/>
        <end position="76"/>
    </location>
    <ligand>
        <name>substrate</name>
    </ligand>
</feature>
<feature type="binding site" evidence="1">
    <location>
        <position position="114"/>
    </location>
    <ligand>
        <name>substrate</name>
    </ligand>
</feature>
<feature type="non-terminal residue">
    <location>
        <position position="1"/>
    </location>
</feature>
<name>AMYB_SECCE</name>
<organism>
    <name type="scientific">Secale cereale</name>
    <name type="common">Rye</name>
    <dbReference type="NCBI Taxonomy" id="4550"/>
    <lineage>
        <taxon>Eukaryota</taxon>
        <taxon>Viridiplantae</taxon>
        <taxon>Streptophyta</taxon>
        <taxon>Embryophyta</taxon>
        <taxon>Tracheophyta</taxon>
        <taxon>Spermatophyta</taxon>
        <taxon>Magnoliopsida</taxon>
        <taxon>Liliopsida</taxon>
        <taxon>Poales</taxon>
        <taxon>Poaceae</taxon>
        <taxon>BOP clade</taxon>
        <taxon>Pooideae</taxon>
        <taxon>Triticodae</taxon>
        <taxon>Triticeae</taxon>
        <taxon>Hordeinae</taxon>
        <taxon>Secale</taxon>
    </lineage>
</organism>
<evidence type="ECO:0000250" key="1">
    <source>
        <dbReference type="UniProtKB" id="P10538"/>
    </source>
</evidence>
<evidence type="ECO:0000305" key="2"/>
<keyword id="KW-0119">Carbohydrate metabolism</keyword>
<keyword id="KW-0326">Glycosidase</keyword>
<keyword id="KW-0378">Hydrolase</keyword>
<keyword id="KW-0624">Polysaccharide degradation</keyword>
<accession>P30271</accession>
<sequence length="222" mass="24349">SHAAEVTAGYYNLHDRDDYRPIARMLTRHHASLNFTCAEMRDSEQSSQAMSAPEELVQQVWSAGWREGLNIACENALPRYDPTAYNTILRNARPHGINHSSPTEHKLFGFTYLRLSNQLLEGQNYVNFKTFVDRMHANLPHDPSVDPVAPLQRSGPEIPIEVILQAAQPKLDPFPFEDHTDLPVQCLGGIGGGEVECPAGGIGGEVQQDPTGGMGGELPPAV</sequence>
<protein>
    <recommendedName>
        <fullName>Beta-amylase</fullName>
        <ecNumber>3.2.1.2</ecNumber>
    </recommendedName>
    <alternativeName>
        <fullName>1,4-alpha-D-glucan maltohydrolase</fullName>
    </alternativeName>
</protein>